<organism>
    <name type="scientific">Synechococcus sp. (strain JA-3-3Ab)</name>
    <name type="common">Cyanobacteria bacterium Yellowstone A-Prime</name>
    <dbReference type="NCBI Taxonomy" id="321327"/>
    <lineage>
        <taxon>Bacteria</taxon>
        <taxon>Bacillati</taxon>
        <taxon>Cyanobacteriota</taxon>
        <taxon>Cyanophyceae</taxon>
        <taxon>Synechococcales</taxon>
        <taxon>Synechococcaceae</taxon>
        <taxon>Synechococcus</taxon>
    </lineage>
</organism>
<accession>Q2JX86</accession>
<comment type="function">
    <text evidence="1">Catalyzes the reversible isomerization of glucose-6-phosphate to fructose-6-phosphate.</text>
</comment>
<comment type="catalytic activity">
    <reaction evidence="1">
        <text>alpha-D-glucose 6-phosphate = beta-D-fructose 6-phosphate</text>
        <dbReference type="Rhea" id="RHEA:11816"/>
        <dbReference type="ChEBI" id="CHEBI:57634"/>
        <dbReference type="ChEBI" id="CHEBI:58225"/>
        <dbReference type="EC" id="5.3.1.9"/>
    </reaction>
</comment>
<comment type="pathway">
    <text evidence="1">Carbohydrate biosynthesis; gluconeogenesis.</text>
</comment>
<comment type="pathway">
    <text evidence="1">Carbohydrate degradation; glycolysis; D-glyceraldehyde 3-phosphate and glycerone phosphate from D-glucose: step 2/4.</text>
</comment>
<comment type="subcellular location">
    <subcellularLocation>
        <location evidence="1">Cytoplasm</location>
    </subcellularLocation>
</comment>
<comment type="similarity">
    <text evidence="1">Belongs to the GPI family.</text>
</comment>
<reference key="1">
    <citation type="journal article" date="2007" name="ISME J.">
        <title>Population level functional diversity in a microbial community revealed by comparative genomic and metagenomic analyses.</title>
        <authorList>
            <person name="Bhaya D."/>
            <person name="Grossman A.R."/>
            <person name="Steunou A.-S."/>
            <person name="Khuri N."/>
            <person name="Cohan F.M."/>
            <person name="Hamamura N."/>
            <person name="Melendrez M.C."/>
            <person name="Bateson M.M."/>
            <person name="Ward D.M."/>
            <person name="Heidelberg J.F."/>
        </authorList>
    </citation>
    <scope>NUCLEOTIDE SEQUENCE [LARGE SCALE GENOMIC DNA]</scope>
    <source>
        <strain>JA-3-3Ab</strain>
    </source>
</reference>
<dbReference type="EC" id="5.3.1.9" evidence="1"/>
<dbReference type="EMBL" id="CP000239">
    <property type="protein sequence ID" value="ABC98606.1"/>
    <property type="molecule type" value="Genomic_DNA"/>
</dbReference>
<dbReference type="RefSeq" id="WP_011429295.1">
    <property type="nucleotide sequence ID" value="NC_007775.1"/>
</dbReference>
<dbReference type="SMR" id="Q2JX86"/>
<dbReference type="STRING" id="321327.CYA_0387"/>
<dbReference type="KEGG" id="cya:CYA_0387"/>
<dbReference type="eggNOG" id="COG0166">
    <property type="taxonomic scope" value="Bacteria"/>
</dbReference>
<dbReference type="HOGENOM" id="CLU_033288_0_0_3"/>
<dbReference type="OrthoDB" id="140919at2"/>
<dbReference type="UniPathway" id="UPA00109">
    <property type="reaction ID" value="UER00181"/>
</dbReference>
<dbReference type="UniPathway" id="UPA00138"/>
<dbReference type="Proteomes" id="UP000008818">
    <property type="component" value="Chromosome"/>
</dbReference>
<dbReference type="GO" id="GO:0005829">
    <property type="term" value="C:cytosol"/>
    <property type="evidence" value="ECO:0007669"/>
    <property type="project" value="TreeGrafter"/>
</dbReference>
<dbReference type="GO" id="GO:0097367">
    <property type="term" value="F:carbohydrate derivative binding"/>
    <property type="evidence" value="ECO:0007669"/>
    <property type="project" value="InterPro"/>
</dbReference>
<dbReference type="GO" id="GO:0004347">
    <property type="term" value="F:glucose-6-phosphate isomerase activity"/>
    <property type="evidence" value="ECO:0007669"/>
    <property type="project" value="UniProtKB-UniRule"/>
</dbReference>
<dbReference type="GO" id="GO:0048029">
    <property type="term" value="F:monosaccharide binding"/>
    <property type="evidence" value="ECO:0007669"/>
    <property type="project" value="TreeGrafter"/>
</dbReference>
<dbReference type="GO" id="GO:0006094">
    <property type="term" value="P:gluconeogenesis"/>
    <property type="evidence" value="ECO:0007669"/>
    <property type="project" value="UniProtKB-UniRule"/>
</dbReference>
<dbReference type="GO" id="GO:0051156">
    <property type="term" value="P:glucose 6-phosphate metabolic process"/>
    <property type="evidence" value="ECO:0007669"/>
    <property type="project" value="TreeGrafter"/>
</dbReference>
<dbReference type="GO" id="GO:0006096">
    <property type="term" value="P:glycolytic process"/>
    <property type="evidence" value="ECO:0007669"/>
    <property type="project" value="UniProtKB-UniRule"/>
</dbReference>
<dbReference type="CDD" id="cd05015">
    <property type="entry name" value="SIS_PGI_1"/>
    <property type="match status" value="1"/>
</dbReference>
<dbReference type="CDD" id="cd05016">
    <property type="entry name" value="SIS_PGI_2"/>
    <property type="match status" value="1"/>
</dbReference>
<dbReference type="FunFam" id="3.40.50.10490:FF:000021">
    <property type="entry name" value="Glucose-6-phosphate isomerase"/>
    <property type="match status" value="1"/>
</dbReference>
<dbReference type="FunFam" id="3.40.50.10490:FF:000023">
    <property type="entry name" value="Glucose-6-phosphate isomerase"/>
    <property type="match status" value="1"/>
</dbReference>
<dbReference type="Gene3D" id="3.40.50.10490">
    <property type="entry name" value="Glucose-6-phosphate isomerase like protein, domain 1"/>
    <property type="match status" value="2"/>
</dbReference>
<dbReference type="HAMAP" id="MF_00473">
    <property type="entry name" value="G6P_isomerase"/>
    <property type="match status" value="1"/>
</dbReference>
<dbReference type="InterPro" id="IPR001672">
    <property type="entry name" value="G6P_Isomerase"/>
</dbReference>
<dbReference type="InterPro" id="IPR018189">
    <property type="entry name" value="Phosphoglucose_isomerase_CS"/>
</dbReference>
<dbReference type="InterPro" id="IPR046348">
    <property type="entry name" value="SIS_dom_sf"/>
</dbReference>
<dbReference type="InterPro" id="IPR035476">
    <property type="entry name" value="SIS_PGI_1"/>
</dbReference>
<dbReference type="InterPro" id="IPR035482">
    <property type="entry name" value="SIS_PGI_2"/>
</dbReference>
<dbReference type="NCBIfam" id="NF010696">
    <property type="entry name" value="PRK14096.1"/>
    <property type="match status" value="1"/>
</dbReference>
<dbReference type="PANTHER" id="PTHR11469">
    <property type="entry name" value="GLUCOSE-6-PHOSPHATE ISOMERASE"/>
    <property type="match status" value="1"/>
</dbReference>
<dbReference type="PANTHER" id="PTHR11469:SF1">
    <property type="entry name" value="GLUCOSE-6-PHOSPHATE ISOMERASE"/>
    <property type="match status" value="1"/>
</dbReference>
<dbReference type="Pfam" id="PF00342">
    <property type="entry name" value="PGI"/>
    <property type="match status" value="1"/>
</dbReference>
<dbReference type="PRINTS" id="PR00662">
    <property type="entry name" value="G6PISOMERASE"/>
</dbReference>
<dbReference type="SUPFAM" id="SSF53697">
    <property type="entry name" value="SIS domain"/>
    <property type="match status" value="1"/>
</dbReference>
<dbReference type="PROSITE" id="PS00174">
    <property type="entry name" value="P_GLUCOSE_ISOMERASE_2"/>
    <property type="match status" value="1"/>
</dbReference>
<dbReference type="PROSITE" id="PS51463">
    <property type="entry name" value="P_GLUCOSE_ISOMERASE_3"/>
    <property type="match status" value="1"/>
</dbReference>
<proteinExistence type="inferred from homology"/>
<keyword id="KW-0963">Cytoplasm</keyword>
<keyword id="KW-0312">Gluconeogenesis</keyword>
<keyword id="KW-0324">Glycolysis</keyword>
<keyword id="KW-0413">Isomerase</keyword>
<name>G6PI_SYNJA</name>
<gene>
    <name evidence="1" type="primary">pgi</name>
    <name type="ordered locus">CYA_0387</name>
</gene>
<evidence type="ECO:0000255" key="1">
    <source>
        <dbReference type="HAMAP-Rule" id="MF_00473"/>
    </source>
</evidence>
<protein>
    <recommendedName>
        <fullName evidence="1">Glucose-6-phosphate isomerase</fullName>
        <shortName evidence="1">GPI</shortName>
        <ecNumber evidence="1">5.3.1.9</ecNumber>
    </recommendedName>
    <alternativeName>
        <fullName evidence="1">Phosphoglucose isomerase</fullName>
        <shortName evidence="1">PGI</shortName>
    </alternativeName>
    <alternativeName>
        <fullName evidence="1">Phosphohexose isomerase</fullName>
        <shortName evidence="1">PHI</shortName>
    </alternativeName>
</protein>
<feature type="chain" id="PRO_0000252657" description="Glucose-6-phosphate isomerase">
    <location>
        <begin position="1"/>
        <end position="532"/>
    </location>
</feature>
<feature type="active site" description="Proton donor" evidence="1">
    <location>
        <position position="322"/>
    </location>
</feature>
<feature type="active site" evidence="1">
    <location>
        <position position="351"/>
    </location>
</feature>
<feature type="active site" evidence="1">
    <location>
        <position position="457"/>
    </location>
</feature>
<sequence>MDSLQLWQRYCDWLYYHPELEIFVDISRIRFTPAQVEALRPLFARAFAEMQALEAGAIANPDEGRQVGHYWLRAPELAPTAEIRQAIQDCVEQVESFAKKIHCGTIPASGGGRFTELLWIGIGGSALGPQFVAEALAPLQPPLNIHFIDNTDPDGFDRVLGRLAGKLGQTLVVVTSKSGNTPEPRNALVEVELAYRKAGIPFSAHAVAITGPGSQLEQQARQEGWLAVFPIFDWVGGRTSETSAVGLLPAALQGIDIRALLAGAATMDKATRVPHLERNPAALLAMAWYIVGEGRGRKDMVVLPYKDRLALFSRYLQQLVMESLGKSHDLQGNRVEQGLTVYGNKGTTDQHAYVQQLRDGLNNFFVTFIEVLQDREPGIPSPFVEPEVTSGDYLDGLLQGTRQALYENGRDSVTITLPRVDARSVGALIALYERAVGLYASLIQVNAYHQPGVEAGKKAASAVLQLQRQVLEVMREQKGSLTLPQLAEKLSCPERIETLYWIVRHLQANGRSLVLVGDPGRPLELSIQPRPA</sequence>